<comment type="function">
    <text evidence="2">Maltose-binding lectin. No affinity is detected toward glucose. Has hemagglutinating activity against rabbit erythrocytes at 3.9 ug/ml. No carbonate dehydratase or trypsin inhibitor activity detected by measuring the hydrolysis of 4-nitrophenyl acetate or the inhibition of bovine trypsin-catalyzed hydrolysis of N-benzoyl-L-arginine ethyl ester, respectively.</text>
</comment>
<comment type="activity regulation">
    <text evidence="2">Loss of hemagglutinating activity by EDTA treatment. The activity is fully recovered by the addition of 5 mM Ca(2+) ions, but not with Mg(2+) and Mn 2(+). Hemagglutination activity is inhibited by maltose and its derivatives, with maltopentaose and maltohexaose being the best inhibitors followed by maltose and iso maltose. Not inhibited by glycoproteins.</text>
</comment>
<comment type="biophysicochemical properties">
    <phDependence>
        <text evidence="2">Full hemagglutinating activity after 3 hours of incubation at pH 3-9 at room temperature.</text>
    </phDependence>
    <temperatureDependence>
        <text evidence="2">The hemagglutinating activity is stable at 50 degrees Celsius up to 40 minutes, but decreases to 50% after 80 minutes.</text>
    </temperatureDependence>
</comment>
<comment type="subunit">
    <text evidence="2">Homodimer; disulfide-linked.</text>
</comment>
<comment type="tissue specificity">
    <text evidence="2">Expressed in tuber (at protein level).</text>
</comment>
<comment type="PTM">
    <text evidence="2">Not glycosylated.</text>
</comment>
<comment type="similarity">
    <text evidence="4">Belongs to the alpha-class carbonic anhydrase family.</text>
</comment>
<comment type="caution">
    <text evidence="4">Despite overall sequence similarity to the typical alpha class carbonic anhydrases, lacks one of the three conserved catalytic zinc-ligand histidines.</text>
</comment>
<feature type="signal peptide" evidence="2">
    <location>
        <begin position="1"/>
        <end position="25"/>
    </location>
</feature>
<feature type="chain" id="PRO_5004286874" description="Dioscorin DB3L" evidence="5">
    <location>
        <begin position="26"/>
        <end position="272"/>
    </location>
</feature>
<feature type="domain" description="Alpha-carbonic anhydrase" evidence="1">
    <location>
        <begin position="28"/>
        <end position="263"/>
    </location>
</feature>
<feature type="disulfide bond" evidence="5">
    <location>
        <begin position="53"/>
        <end position="213"/>
    </location>
</feature>
<feature type="disulfide bond" description="Interchain" evidence="5">
    <location>
        <position position="65"/>
    </location>
</feature>
<sequence>MSSSTLFHLFLLSSLLFSCLSNARPDEDDFSYIEGSPNGPENWGNLNPEWKTCGNGMEQSPINLCDDRVIQTPALGKLRTSYQAARATLKNNGHDIMVNFKSDAGSQFINQVRYQLKRIHFHSPSEHVLNGERFDLEVQMVHESQDQRRAVTAILFRFGRSDPFLSDLEDFISQISKSEKNEVDAGVVDPRQLLQFDDPAYYRYMGSFTAPPCTEDITWTVIKKLGTVSPRQVLMLKQAVNENAINNARPLQPLKFRTIFFYPRQKSNHDAI</sequence>
<accession>Q75N35</accession>
<evidence type="ECO:0000255" key="1">
    <source>
        <dbReference type="PROSITE-ProRule" id="PRU01134"/>
    </source>
</evidence>
<evidence type="ECO:0000269" key="2">
    <source>
    </source>
</evidence>
<evidence type="ECO:0000303" key="3">
    <source>
    </source>
</evidence>
<evidence type="ECO:0000305" key="4"/>
<evidence type="ECO:0000305" key="5">
    <source>
    </source>
</evidence>
<evidence type="ECO:0000312" key="6">
    <source>
        <dbReference type="EMBL" id="BAD18020.1"/>
    </source>
</evidence>
<organism>
    <name type="scientific">Dioscorea polystachya</name>
    <name type="common">Chinese yam</name>
    <dbReference type="NCBI Taxonomy" id="55575"/>
    <lineage>
        <taxon>Eukaryota</taxon>
        <taxon>Viridiplantae</taxon>
        <taxon>Streptophyta</taxon>
        <taxon>Embryophyta</taxon>
        <taxon>Tracheophyta</taxon>
        <taxon>Spermatophyta</taxon>
        <taxon>Magnoliopsida</taxon>
        <taxon>Liliopsida</taxon>
        <taxon>Dioscoreales</taxon>
        <taxon>Dioscoreaceae</taxon>
        <taxon>Dioscorea</taxon>
    </lineage>
</organism>
<keyword id="KW-0903">Direct protein sequencing</keyword>
<keyword id="KW-1015">Disulfide bond</keyword>
<keyword id="KW-0430">Lectin</keyword>
<keyword id="KW-0732">Signal</keyword>
<dbReference type="EMBL" id="AB178472">
    <property type="protein sequence ID" value="BAD18020.1"/>
    <property type="molecule type" value="mRNA"/>
</dbReference>
<dbReference type="SMR" id="Q75N35"/>
<dbReference type="GO" id="GO:0048030">
    <property type="term" value="F:disaccharide binding"/>
    <property type="evidence" value="ECO:0000314"/>
    <property type="project" value="UniProtKB"/>
</dbReference>
<dbReference type="GO" id="GO:0016836">
    <property type="term" value="F:hydro-lyase activity"/>
    <property type="evidence" value="ECO:0007669"/>
    <property type="project" value="TreeGrafter"/>
</dbReference>
<dbReference type="GO" id="GO:1901982">
    <property type="term" value="F:maltose binding"/>
    <property type="evidence" value="ECO:0000314"/>
    <property type="project" value="UniProtKB"/>
</dbReference>
<dbReference type="GO" id="GO:0042803">
    <property type="term" value="F:protein homodimerization activity"/>
    <property type="evidence" value="ECO:0000314"/>
    <property type="project" value="UniProtKB"/>
</dbReference>
<dbReference type="GO" id="GO:0008270">
    <property type="term" value="F:zinc ion binding"/>
    <property type="evidence" value="ECO:0007669"/>
    <property type="project" value="InterPro"/>
</dbReference>
<dbReference type="GO" id="GO:0006730">
    <property type="term" value="P:one-carbon metabolic process"/>
    <property type="evidence" value="ECO:0007669"/>
    <property type="project" value="TreeGrafter"/>
</dbReference>
<dbReference type="CDD" id="cd03124">
    <property type="entry name" value="alpha_CA_prokaryotic_like"/>
    <property type="match status" value="1"/>
</dbReference>
<dbReference type="Gene3D" id="3.10.200.10">
    <property type="entry name" value="Alpha carbonic anhydrase"/>
    <property type="match status" value="1"/>
</dbReference>
<dbReference type="InterPro" id="IPR041891">
    <property type="entry name" value="Alpha_CA_prokaryot-like"/>
</dbReference>
<dbReference type="InterPro" id="IPR001148">
    <property type="entry name" value="CA_dom"/>
</dbReference>
<dbReference type="InterPro" id="IPR036398">
    <property type="entry name" value="CA_dom_sf"/>
</dbReference>
<dbReference type="InterPro" id="IPR023561">
    <property type="entry name" value="Carbonic_anhydrase_a-class"/>
</dbReference>
<dbReference type="PANTHER" id="PTHR18952">
    <property type="entry name" value="CARBONIC ANHYDRASE"/>
    <property type="match status" value="1"/>
</dbReference>
<dbReference type="PANTHER" id="PTHR18952:SF253">
    <property type="entry name" value="OS08G0470200 PROTEIN"/>
    <property type="match status" value="1"/>
</dbReference>
<dbReference type="Pfam" id="PF00194">
    <property type="entry name" value="Carb_anhydrase"/>
    <property type="match status" value="1"/>
</dbReference>
<dbReference type="SMART" id="SM01057">
    <property type="entry name" value="Carb_anhydrase"/>
    <property type="match status" value="1"/>
</dbReference>
<dbReference type="SUPFAM" id="SSF51069">
    <property type="entry name" value="Carbonic anhydrase"/>
    <property type="match status" value="1"/>
</dbReference>
<dbReference type="PROSITE" id="PS51144">
    <property type="entry name" value="ALPHA_CA_2"/>
    <property type="match status" value="1"/>
</dbReference>
<proteinExistence type="evidence at protein level"/>
<protein>
    <recommendedName>
        <fullName evidence="4">Dioscorin DB3L</fullName>
    </recommendedName>
    <alternativeName>
        <fullName evidence="4">Tuber storage protein DB3L</fullName>
    </alternativeName>
</protein>
<reference evidence="6" key="1">
    <citation type="journal article" date="2004" name="J. Biol. Chem.">
        <title>Characterization of the yam tuber storage proteins from Dioscorea batatas exhibiting unique lectin activities.</title>
        <authorList>
            <person name="Gaidamashvili M."/>
            <person name="Ohizum Y."/>
            <person name="Iijima S."/>
            <person name="Takayama T."/>
            <person name="Ogawa T."/>
            <person name="Muramoto K."/>
        </authorList>
    </citation>
    <scope>NUCLEOTIDE SEQUENCE [MRNA]</scope>
    <scope>PROTEIN SEQUENCE OF 26-267</scope>
    <scope>FUNCTION</scope>
    <scope>ACTIVITY REGULATION</scope>
    <scope>BIOPHYSICOCHEMICAL PROPERTIES</scope>
    <scope>SUBUNIT</scope>
    <scope>TISSUE SPECIFICITY</scope>
    <scope>PTM</scope>
    <scope>IDENTIFICATION BY MASS SPECTROMETRY</scope>
    <scope>DISULFIDE BONDS</scope>
    <source>
        <tissue evidence="3 6">Tuber</tissue>
    </source>
</reference>
<gene>
    <name evidence="6" type="primary">DB3L</name>
</gene>
<name>DB3L_DIOPO</name>